<comment type="function">
    <text>This glucoamylase has a specificity toward both alpha-1,4 and alpha-1,6 linkages.</text>
</comment>
<comment type="catalytic activity">
    <reaction evidence="3">
        <text>Hydrolysis of terminal (1-&gt;4)-linked alpha-D-glucose residues successively from non-reducing ends of the chains with release of beta-D-glucose.</text>
        <dbReference type="EC" id="3.2.1.3"/>
    </reaction>
</comment>
<comment type="similarity">
    <text evidence="4">Belongs to the glycosyl hydrolase 31 family.</text>
</comment>
<reference key="1">
    <citation type="journal article" date="1990" name="Gene">
        <title>Cloning of the Schwanniomyces occidentalis glucoamylase gene (GAM1) and its expression in Saccharomyces cerevisiae.</title>
        <authorList>
            <person name="Dohmen R.J."/>
            <person name="Strasser A.W.M."/>
            <person name="Dahlems U.M."/>
            <person name="Hollenberg C.P."/>
        </authorList>
    </citation>
    <scope>NUCLEOTIDE SEQUENCE [GENOMIC DNA]</scope>
    <scope>PARTIAL PROTEIN SEQUENCE</scope>
    <source>
        <strain>ATCC 26076 / DSM 3794 / CBS 2864 / BCRC 22059 / NCYC 954 / NRRL Y-2470</strain>
    </source>
</reference>
<reference key="2">
    <citation type="journal article" date="1991" name="FEBS Lett.">
        <title>Striking structural and functional similarities suggest that intestinal sucrase-isomaltase, human lysosomal alpha-glucosidase and Schwanniomyces occidentalis glucoamylase are derived from a common ancestral gene.</title>
        <authorList>
            <person name="Naim H.Y."/>
            <person name="Niermann T."/>
            <person name="Kleinhans U."/>
            <person name="Hollenberg C.P."/>
            <person name="Strasser A.W.M."/>
        </authorList>
    </citation>
    <scope>SIMILARITY TO OTHER FAMILY 31 MEMBERS</scope>
</reference>
<sequence>MIFLKLIKSIVIGLGLVSAIQAAPASSIGSSASASSSSESSQATIPNDVTLGVKQIPNIFNDSAVDANAAAKGYDLVNVTNTPRGLTGILKLKEATNIYGYDFDYLNLTVEYQADTRLNVHIEPTDLSDVFVLPEHLVVKPLVEGDAQSYNFDNSDLVFEYSNTDFSFEVIRSSTKEVLFSTKGNPLVFSNQFIQFNSSLPKNHVITGLGESIHGLVNEPGSVKTLFANDVGDPIDGNIYGVHPVYLDQRYDTETTHAVYWRTSAIQEVLIGEESITWRALSGVIDLYFFSGPTPKDAIQQYVKEIGLPAFQPYWSLGYHQCRWGYDTIEKLSEVVENFKKFNIPLETIWSDIDYMDSYKDFTYDPHRFPLDEYRKFLDELHKNNQHYVPILDAAIYVPNPNNATDNEYQPFHYGNETDVFLKNPDGSLYIGAVWQVTLFSRFLSRKHSDMDKVIKDWYELTPFDGIWADMNEVSSFCVGSCGTGKYFENPAYPPFTVGSKATSYPVGFDVSNASEWKSIQSSISATAKTSSTSSVSSSSSTIDYMNTLAPGKGNINYPPYAIYNMQGDSDLATHAVSPNATHADGTVEYDIHNLYGYLQENATYHALLEVFPNKRPFMISRSTFPRAGKWTGHWGGDNTADWAYAYFSIPQAFSMGIAGLPFFGADVCGFNGNSDSELCSRWMQLGSFFPFYRNHNYLGAIDQEPYVWESVAEATRTSMAIRYLLLPYYYTLLHESHTTGLPILRAFSWQFPNDRSLSGVDNQFFVGDGLVVTPVLEPGVDKVKGVFPGAGKEEVYYDWYTQREVHFKDGKNETLDAPLGHIPLHIRGGNVLPTQEPGYTVAESRQNPFGLIVALDNDGKAQGSLYLDDGESLVVDSSLLVSFSVSDNTLSASPSGDYKADQPLANVTILGVGHKPKSVKFENANVDFTYKKSTVFVTGLDKYTKDGAFSKDFTITW</sequence>
<accession>P22861</accession>
<accession>Q92336</accession>
<proteinExistence type="evidence at protein level"/>
<evidence type="ECO:0000250" key="1"/>
<evidence type="ECO:0000255" key="2"/>
<evidence type="ECO:0000255" key="3">
    <source>
        <dbReference type="PROSITE-ProRule" id="PRU10066"/>
    </source>
</evidence>
<evidence type="ECO:0000305" key="4"/>
<feature type="signal peptide" evidence="2">
    <location>
        <begin position="1"/>
        <end position="22"/>
    </location>
</feature>
<feature type="chain" id="PRO_0000018586" description="Glucoamylase 1">
    <location>
        <begin position="23"/>
        <end position="958"/>
    </location>
</feature>
<feature type="active site" evidence="1">
    <location>
        <position position="470"/>
    </location>
</feature>
<feature type="active site" evidence="1">
    <location>
        <position position="473"/>
    </location>
</feature>
<feature type="active site" description="Proton donor" evidence="1">
    <location>
        <position position="638"/>
    </location>
</feature>
<feature type="glycosylation site" description="N-linked (GlcNAc...) asparagine" evidence="2">
    <location>
        <position position="61"/>
    </location>
</feature>
<feature type="glycosylation site" description="N-linked (GlcNAc...) asparagine" evidence="2">
    <location>
        <position position="78"/>
    </location>
</feature>
<feature type="glycosylation site" description="N-linked (GlcNAc...) asparagine" evidence="2">
    <location>
        <position position="107"/>
    </location>
</feature>
<feature type="glycosylation site" description="N-linked (GlcNAc...) asparagine" evidence="2">
    <location>
        <position position="197"/>
    </location>
</feature>
<feature type="glycosylation site" description="N-linked (GlcNAc...) asparagine" evidence="2">
    <location>
        <position position="403"/>
    </location>
</feature>
<feature type="glycosylation site" description="N-linked (GlcNAc...) asparagine" evidence="2">
    <location>
        <position position="416"/>
    </location>
</feature>
<feature type="glycosylation site" description="N-linked (GlcNAc...) asparagine" evidence="2">
    <location>
        <position position="513"/>
    </location>
</feature>
<feature type="glycosylation site" description="N-linked (GlcNAc...) asparagine" evidence="2">
    <location>
        <position position="580"/>
    </location>
</feature>
<feature type="glycosylation site" description="N-linked (GlcNAc...) asparagine" evidence="2">
    <location>
        <position position="602"/>
    </location>
</feature>
<feature type="glycosylation site" description="N-linked (GlcNAc...) asparagine" evidence="2">
    <location>
        <position position="813"/>
    </location>
</feature>
<feature type="glycosylation site" description="N-linked (GlcNAc...) asparagine" evidence="2">
    <location>
        <position position="907"/>
    </location>
</feature>
<organism>
    <name type="scientific">Schwanniomyces occidentalis</name>
    <name type="common">Yeast</name>
    <name type="synonym">Debaryomyces occidentalis</name>
    <dbReference type="NCBI Taxonomy" id="27300"/>
    <lineage>
        <taxon>Eukaryota</taxon>
        <taxon>Fungi</taxon>
        <taxon>Dikarya</taxon>
        <taxon>Ascomycota</taxon>
        <taxon>Saccharomycotina</taxon>
        <taxon>Pichiomycetes</taxon>
        <taxon>Debaryomycetaceae</taxon>
        <taxon>Schwanniomyces</taxon>
    </lineage>
</organism>
<gene>
    <name type="primary">GAM1</name>
</gene>
<keyword id="KW-0119">Carbohydrate metabolism</keyword>
<keyword id="KW-0903">Direct protein sequencing</keyword>
<keyword id="KW-0325">Glycoprotein</keyword>
<keyword id="KW-0326">Glycosidase</keyword>
<keyword id="KW-0378">Hydrolase</keyword>
<keyword id="KW-0624">Polysaccharide degradation</keyword>
<keyword id="KW-0732">Signal</keyword>
<protein>
    <recommendedName>
        <fullName>Glucoamylase 1</fullName>
        <ecNumber>3.2.1.3</ecNumber>
    </recommendedName>
    <alternativeName>
        <fullName>1,4-alpha-D-glucan glucohydrolase</fullName>
    </alternativeName>
    <alternativeName>
        <fullName>Glucan 1,4-alpha-glucosidase</fullName>
    </alternativeName>
</protein>
<name>AMYG_SCHOC</name>
<dbReference type="EC" id="3.2.1.3"/>
<dbReference type="EMBL" id="M60207">
    <property type="protein sequence ID" value="AAA33923.1"/>
    <property type="molecule type" value="Genomic_DNA"/>
</dbReference>
<dbReference type="PIR" id="JN0102">
    <property type="entry name" value="JN0102"/>
</dbReference>
<dbReference type="SMR" id="P22861"/>
<dbReference type="CAZy" id="GH31">
    <property type="family name" value="Glycoside Hydrolase Family 31"/>
</dbReference>
<dbReference type="GlyCosmos" id="P22861">
    <property type="glycosylation" value="11 sites, No reported glycans"/>
</dbReference>
<dbReference type="GO" id="GO:0030246">
    <property type="term" value="F:carbohydrate binding"/>
    <property type="evidence" value="ECO:0007669"/>
    <property type="project" value="InterPro"/>
</dbReference>
<dbReference type="GO" id="GO:0004339">
    <property type="term" value="F:glucan 1,4-alpha-glucosidase activity"/>
    <property type="evidence" value="ECO:0007669"/>
    <property type="project" value="UniProtKB-EC"/>
</dbReference>
<dbReference type="GO" id="GO:0000272">
    <property type="term" value="P:polysaccharide catabolic process"/>
    <property type="evidence" value="ECO:0007669"/>
    <property type="project" value="UniProtKB-KW"/>
</dbReference>
<dbReference type="CDD" id="cd06602">
    <property type="entry name" value="GH31_MGAM_SI_GAA"/>
    <property type="match status" value="1"/>
</dbReference>
<dbReference type="CDD" id="cd14752">
    <property type="entry name" value="GH31_N"/>
    <property type="match status" value="1"/>
</dbReference>
<dbReference type="FunFam" id="2.60.40.1180:FF:000001">
    <property type="entry name" value="Maltase-glucoamylase, intestinal"/>
    <property type="match status" value="1"/>
</dbReference>
<dbReference type="FunFam" id="3.20.20.80:FF:000138">
    <property type="entry name" value="Putative alpha-glucosidase AgdA"/>
    <property type="match status" value="1"/>
</dbReference>
<dbReference type="Gene3D" id="3.20.20.80">
    <property type="entry name" value="Glycosidases"/>
    <property type="match status" value="2"/>
</dbReference>
<dbReference type="Gene3D" id="2.60.40.1760">
    <property type="entry name" value="glycosyl hydrolase (family 31)"/>
    <property type="match status" value="1"/>
</dbReference>
<dbReference type="Gene3D" id="2.60.40.1180">
    <property type="entry name" value="Golgi alpha-mannosidase II"/>
    <property type="match status" value="2"/>
</dbReference>
<dbReference type="InterPro" id="IPR011013">
    <property type="entry name" value="Gal_mutarotase_sf_dom"/>
</dbReference>
<dbReference type="InterPro" id="IPR030458">
    <property type="entry name" value="Glyco_hydro_31_AS"/>
</dbReference>
<dbReference type="InterPro" id="IPR048395">
    <property type="entry name" value="Glyco_hydro_31_C"/>
</dbReference>
<dbReference type="InterPro" id="IPR030459">
    <property type="entry name" value="Glyco_hydro_31_CS"/>
</dbReference>
<dbReference type="InterPro" id="IPR000322">
    <property type="entry name" value="Glyco_hydro_31_TIM"/>
</dbReference>
<dbReference type="InterPro" id="IPR013780">
    <property type="entry name" value="Glyco_hydro_b"/>
</dbReference>
<dbReference type="InterPro" id="IPR017853">
    <property type="entry name" value="Glycoside_hydrolase_SF"/>
</dbReference>
<dbReference type="PANTHER" id="PTHR22762">
    <property type="entry name" value="ALPHA-GLUCOSIDASE"/>
    <property type="match status" value="1"/>
</dbReference>
<dbReference type="PANTHER" id="PTHR22762:SF133">
    <property type="entry name" value="P-TYPE DOMAIN-CONTAINING PROTEIN"/>
    <property type="match status" value="1"/>
</dbReference>
<dbReference type="Pfam" id="PF01055">
    <property type="entry name" value="Glyco_hydro_31_2nd"/>
    <property type="match status" value="1"/>
</dbReference>
<dbReference type="Pfam" id="PF21365">
    <property type="entry name" value="Glyco_hydro_31_3rd"/>
    <property type="match status" value="1"/>
</dbReference>
<dbReference type="SUPFAM" id="SSF51445">
    <property type="entry name" value="(Trans)glycosidases"/>
    <property type="match status" value="1"/>
</dbReference>
<dbReference type="SUPFAM" id="SSF74650">
    <property type="entry name" value="Galactose mutarotase-like"/>
    <property type="match status" value="1"/>
</dbReference>
<dbReference type="SUPFAM" id="SSF51011">
    <property type="entry name" value="Glycosyl hydrolase domain"/>
    <property type="match status" value="1"/>
</dbReference>
<dbReference type="PROSITE" id="PS00129">
    <property type="entry name" value="GLYCOSYL_HYDROL_F31_1"/>
    <property type="match status" value="1"/>
</dbReference>
<dbReference type="PROSITE" id="PS00707">
    <property type="entry name" value="GLYCOSYL_HYDROL_F31_2"/>
    <property type="match status" value="1"/>
</dbReference>